<comment type="function">
    <text evidence="1">Catalytic subunit of the periplasmic nitrate reductase complex NapAB. Receives electrons from NapB and catalyzes the reduction of nitrate to nitrite.</text>
</comment>
<comment type="catalytic activity">
    <reaction evidence="1">
        <text>2 Fe(II)-[cytochrome] + nitrate + 2 H(+) = 2 Fe(III)-[cytochrome] + nitrite + H2O</text>
        <dbReference type="Rhea" id="RHEA:12909"/>
        <dbReference type="Rhea" id="RHEA-COMP:11777"/>
        <dbReference type="Rhea" id="RHEA-COMP:11778"/>
        <dbReference type="ChEBI" id="CHEBI:15377"/>
        <dbReference type="ChEBI" id="CHEBI:15378"/>
        <dbReference type="ChEBI" id="CHEBI:16301"/>
        <dbReference type="ChEBI" id="CHEBI:17632"/>
        <dbReference type="ChEBI" id="CHEBI:29033"/>
        <dbReference type="ChEBI" id="CHEBI:29034"/>
        <dbReference type="EC" id="1.9.6.1"/>
    </reaction>
</comment>
<comment type="cofactor">
    <cofactor evidence="1">
        <name>[4Fe-4S] cluster</name>
        <dbReference type="ChEBI" id="CHEBI:49883"/>
    </cofactor>
    <text evidence="1">Binds 1 [4Fe-4S] cluster.</text>
</comment>
<comment type="cofactor">
    <cofactor evidence="1">
        <name>Mo-bis(molybdopterin guanine dinucleotide)</name>
        <dbReference type="ChEBI" id="CHEBI:60539"/>
    </cofactor>
    <text evidence="1">Binds 1 molybdenum-bis(molybdopterin guanine dinucleotide) (Mo-bis-MGD) cofactor per subunit.</text>
</comment>
<comment type="subunit">
    <text evidence="1">Component of the periplasmic nitrate reductase NapAB complex composed of NapA and NapB.</text>
</comment>
<comment type="subcellular location">
    <subcellularLocation>
        <location evidence="1">Periplasm</location>
    </subcellularLocation>
</comment>
<comment type="PTM">
    <text evidence="1">Predicted to be exported by the Tat system. The position of the signal peptide cleavage has not been experimentally proven.</text>
</comment>
<comment type="similarity">
    <text evidence="1">Belongs to the prokaryotic molybdopterin-containing oxidoreductase family. NasA/NapA/NarB subfamily.</text>
</comment>
<accession>Q87GW6</accession>
<keyword id="KW-0004">4Fe-4S</keyword>
<keyword id="KW-0249">Electron transport</keyword>
<keyword id="KW-0408">Iron</keyword>
<keyword id="KW-0411">Iron-sulfur</keyword>
<keyword id="KW-0479">Metal-binding</keyword>
<keyword id="KW-0500">Molybdenum</keyword>
<keyword id="KW-0534">Nitrate assimilation</keyword>
<keyword id="KW-0560">Oxidoreductase</keyword>
<keyword id="KW-0574">Periplasm</keyword>
<keyword id="KW-0732">Signal</keyword>
<keyword id="KW-0813">Transport</keyword>
<evidence type="ECO:0000255" key="1">
    <source>
        <dbReference type="HAMAP-Rule" id="MF_01630"/>
    </source>
</evidence>
<name>NAPA_VIBPA</name>
<protein>
    <recommendedName>
        <fullName evidence="1">Periplasmic nitrate reductase</fullName>
        <ecNumber evidence="1">1.9.6.1</ecNumber>
    </recommendedName>
</protein>
<feature type="signal peptide" description="Tat-type signal" evidence="1">
    <location>
        <begin position="1"/>
        <end position="30"/>
    </location>
</feature>
<feature type="chain" id="PRO_0000046011" description="Periplasmic nitrate reductase" evidence="1">
    <location>
        <begin position="31"/>
        <end position="829"/>
    </location>
</feature>
<feature type="domain" description="4Fe-4S Mo/W bis-MGD-type" evidence="1">
    <location>
        <begin position="41"/>
        <end position="97"/>
    </location>
</feature>
<feature type="binding site" evidence="1">
    <location>
        <position position="48"/>
    </location>
    <ligand>
        <name>[4Fe-4S] cluster</name>
        <dbReference type="ChEBI" id="CHEBI:49883"/>
    </ligand>
</feature>
<feature type="binding site" evidence="1">
    <location>
        <position position="51"/>
    </location>
    <ligand>
        <name>[4Fe-4S] cluster</name>
        <dbReference type="ChEBI" id="CHEBI:49883"/>
    </ligand>
</feature>
<feature type="binding site" evidence="1">
    <location>
        <position position="55"/>
    </location>
    <ligand>
        <name>[4Fe-4S] cluster</name>
        <dbReference type="ChEBI" id="CHEBI:49883"/>
    </ligand>
</feature>
<feature type="binding site" evidence="1">
    <location>
        <position position="83"/>
    </location>
    <ligand>
        <name>[4Fe-4S] cluster</name>
        <dbReference type="ChEBI" id="CHEBI:49883"/>
    </ligand>
</feature>
<feature type="binding site" evidence="1">
    <location>
        <position position="85"/>
    </location>
    <ligand>
        <name>Mo-bis(molybdopterin guanine dinucleotide)</name>
        <dbReference type="ChEBI" id="CHEBI:60539"/>
    </ligand>
</feature>
<feature type="binding site" evidence="1">
    <location>
        <position position="152"/>
    </location>
    <ligand>
        <name>Mo-bis(molybdopterin guanine dinucleotide)</name>
        <dbReference type="ChEBI" id="CHEBI:60539"/>
    </ligand>
</feature>
<feature type="binding site" evidence="1">
    <location>
        <position position="177"/>
    </location>
    <ligand>
        <name>Mo-bis(molybdopterin guanine dinucleotide)</name>
        <dbReference type="ChEBI" id="CHEBI:60539"/>
    </ligand>
</feature>
<feature type="binding site" evidence="1">
    <location>
        <position position="181"/>
    </location>
    <ligand>
        <name>Mo-bis(molybdopterin guanine dinucleotide)</name>
        <dbReference type="ChEBI" id="CHEBI:60539"/>
    </ligand>
</feature>
<feature type="binding site" evidence="1">
    <location>
        <begin position="214"/>
        <end position="221"/>
    </location>
    <ligand>
        <name>Mo-bis(molybdopterin guanine dinucleotide)</name>
        <dbReference type="ChEBI" id="CHEBI:60539"/>
    </ligand>
</feature>
<feature type="binding site" evidence="1">
    <location>
        <begin position="245"/>
        <end position="249"/>
    </location>
    <ligand>
        <name>Mo-bis(molybdopterin guanine dinucleotide)</name>
        <dbReference type="ChEBI" id="CHEBI:60539"/>
    </ligand>
</feature>
<feature type="binding site" evidence="1">
    <location>
        <begin position="264"/>
        <end position="266"/>
    </location>
    <ligand>
        <name>Mo-bis(molybdopterin guanine dinucleotide)</name>
        <dbReference type="ChEBI" id="CHEBI:60539"/>
    </ligand>
</feature>
<feature type="binding site" evidence="1">
    <location>
        <position position="374"/>
    </location>
    <ligand>
        <name>Mo-bis(molybdopterin guanine dinucleotide)</name>
        <dbReference type="ChEBI" id="CHEBI:60539"/>
    </ligand>
</feature>
<feature type="binding site" evidence="1">
    <location>
        <position position="378"/>
    </location>
    <ligand>
        <name>Mo-bis(molybdopterin guanine dinucleotide)</name>
        <dbReference type="ChEBI" id="CHEBI:60539"/>
    </ligand>
</feature>
<feature type="binding site" evidence="1">
    <location>
        <position position="484"/>
    </location>
    <ligand>
        <name>Mo-bis(molybdopterin guanine dinucleotide)</name>
        <dbReference type="ChEBI" id="CHEBI:60539"/>
    </ligand>
</feature>
<feature type="binding site" evidence="1">
    <location>
        <begin position="510"/>
        <end position="511"/>
    </location>
    <ligand>
        <name>Mo-bis(molybdopterin guanine dinucleotide)</name>
        <dbReference type="ChEBI" id="CHEBI:60539"/>
    </ligand>
</feature>
<feature type="binding site" evidence="1">
    <location>
        <position position="533"/>
    </location>
    <ligand>
        <name>Mo-bis(molybdopterin guanine dinucleotide)</name>
        <dbReference type="ChEBI" id="CHEBI:60539"/>
    </ligand>
</feature>
<feature type="binding site" evidence="1">
    <location>
        <position position="560"/>
    </location>
    <ligand>
        <name>Mo-bis(molybdopterin guanine dinucleotide)</name>
        <dbReference type="ChEBI" id="CHEBI:60539"/>
    </ligand>
</feature>
<feature type="binding site" evidence="1">
    <location>
        <begin position="718"/>
        <end position="727"/>
    </location>
    <ligand>
        <name>Mo-bis(molybdopterin guanine dinucleotide)</name>
        <dbReference type="ChEBI" id="CHEBI:60539"/>
    </ligand>
</feature>
<feature type="binding site" evidence="1">
    <location>
        <position position="794"/>
    </location>
    <ligand>
        <name>substrate</name>
    </ligand>
</feature>
<feature type="binding site" evidence="1">
    <location>
        <position position="802"/>
    </location>
    <ligand>
        <name>Mo-bis(molybdopterin guanine dinucleotide)</name>
        <dbReference type="ChEBI" id="CHEBI:60539"/>
    </ligand>
</feature>
<feature type="binding site" evidence="1">
    <location>
        <position position="819"/>
    </location>
    <ligand>
        <name>Mo-bis(molybdopterin guanine dinucleotide)</name>
        <dbReference type="ChEBI" id="CHEBI:60539"/>
    </ligand>
</feature>
<gene>
    <name evidence="1" type="primary">napA</name>
    <name type="ordered locus">VPA1199</name>
</gene>
<sequence length="829" mass="92961">MKMTRRAFVKANAAASAAAVAGITLPASAANLIASSDQTKITWDKAPCRFCGTGCSVLVGTQNGKVVATQGDPEAPVNKGLNCIKGYFLSKIMYGQDRLTQPLLRMKDGKYHKDGEFTPVSWDVAFDTMAEKWKASLEKKGPTSVGMFGSGQWTVMEGYAAAKMMKAGFRSNNIDPNARHCMASAVVGFMRAFGIDEPMGCYDDFENADAFVLWGSNMAEMHPVLWTRITDRRLSHPHVRVNVLSTYYHRSFELADHGYIFNPQSDLAIANFIANYIIENDAVNWDFVNKHTNFTQADTDIGYGLRDDDPLQKAAKNPNSGKLTSISFEEYKKSVAPYTVEKASEISGVEKEKLIELAKQYADPNTKVMSLWTMGMNQHTRGVWMNNLVYNIHLLTGKIATPGNSPFSLTGQPSACGTAREVGTFAHRLPADMVVANPKHRQIAEKIWKLPEGTIPPKPGFHAVLQDRMLNDGVLNCYWVQCNNNMQAGPNINTERLPGYRNPENFIVVSDPYPTATAQAADLILPTAMWIEKEGAYGNAERRTQAWYQQVGTVGDAKSDLWQVMEFSKRFKMEEVWPEELLAKAPQYRGKTMYDMLFKNGQVDKFPLEEARELNDDSHHFGFYVQKGLFEEYATFGRGHGHDLAPYDVYHTVRGLRWPVVDGKETQWRFKEGSDPYAKAGSGWDFYGNADGKAKIISAPYEAPPEVPDSEFDLWLCTGRVLEHWHTGTMTRRVPELYKAVPDAVCYMHPEDAKARNVRRGEEVVIANKRGEVRVRVETRGRNRPPKGLVFVPFFDARILINKLILDATDPLSKQTDFKKCPVKITKVA</sequence>
<dbReference type="EC" id="1.9.6.1" evidence="1"/>
<dbReference type="EMBL" id="BA000032">
    <property type="protein sequence ID" value="BAC62542.1"/>
    <property type="molecule type" value="Genomic_DNA"/>
</dbReference>
<dbReference type="RefSeq" id="NP_800709.1">
    <property type="nucleotide sequence ID" value="NC_004605.1"/>
</dbReference>
<dbReference type="RefSeq" id="WP_005463500.1">
    <property type="nucleotide sequence ID" value="NC_004605.1"/>
</dbReference>
<dbReference type="SMR" id="Q87GW6"/>
<dbReference type="GeneID" id="1191895"/>
<dbReference type="KEGG" id="vpa:VPA1199"/>
<dbReference type="PATRIC" id="fig|223926.6.peg.4125"/>
<dbReference type="eggNOG" id="COG0243">
    <property type="taxonomic scope" value="Bacteria"/>
</dbReference>
<dbReference type="HOGENOM" id="CLU_000422_13_4_6"/>
<dbReference type="Proteomes" id="UP000002493">
    <property type="component" value="Chromosome 2"/>
</dbReference>
<dbReference type="GO" id="GO:0016020">
    <property type="term" value="C:membrane"/>
    <property type="evidence" value="ECO:0007669"/>
    <property type="project" value="TreeGrafter"/>
</dbReference>
<dbReference type="GO" id="GO:0009325">
    <property type="term" value="C:nitrate reductase complex"/>
    <property type="evidence" value="ECO:0007669"/>
    <property type="project" value="TreeGrafter"/>
</dbReference>
<dbReference type="GO" id="GO:0042597">
    <property type="term" value="C:periplasmic space"/>
    <property type="evidence" value="ECO:0007669"/>
    <property type="project" value="UniProtKB-SubCell"/>
</dbReference>
<dbReference type="GO" id="GO:0051539">
    <property type="term" value="F:4 iron, 4 sulfur cluster binding"/>
    <property type="evidence" value="ECO:0007669"/>
    <property type="project" value="UniProtKB-KW"/>
</dbReference>
<dbReference type="GO" id="GO:0009055">
    <property type="term" value="F:electron transfer activity"/>
    <property type="evidence" value="ECO:0007669"/>
    <property type="project" value="UniProtKB-UniRule"/>
</dbReference>
<dbReference type="GO" id="GO:0005506">
    <property type="term" value="F:iron ion binding"/>
    <property type="evidence" value="ECO:0007669"/>
    <property type="project" value="UniProtKB-UniRule"/>
</dbReference>
<dbReference type="GO" id="GO:0030151">
    <property type="term" value="F:molybdenum ion binding"/>
    <property type="evidence" value="ECO:0007669"/>
    <property type="project" value="InterPro"/>
</dbReference>
<dbReference type="GO" id="GO:0043546">
    <property type="term" value="F:molybdopterin cofactor binding"/>
    <property type="evidence" value="ECO:0007669"/>
    <property type="project" value="InterPro"/>
</dbReference>
<dbReference type="GO" id="GO:0050140">
    <property type="term" value="F:nitrate reductase (cytochrome) activity"/>
    <property type="evidence" value="ECO:0007669"/>
    <property type="project" value="UniProtKB-EC"/>
</dbReference>
<dbReference type="GO" id="GO:0045333">
    <property type="term" value="P:cellular respiration"/>
    <property type="evidence" value="ECO:0007669"/>
    <property type="project" value="UniProtKB-ARBA"/>
</dbReference>
<dbReference type="GO" id="GO:0006777">
    <property type="term" value="P:Mo-molybdopterin cofactor biosynthetic process"/>
    <property type="evidence" value="ECO:0007669"/>
    <property type="project" value="UniProtKB-UniRule"/>
</dbReference>
<dbReference type="GO" id="GO:0042128">
    <property type="term" value="P:nitrate assimilation"/>
    <property type="evidence" value="ECO:0007669"/>
    <property type="project" value="UniProtKB-UniRule"/>
</dbReference>
<dbReference type="CDD" id="cd02791">
    <property type="entry name" value="MopB_CT_Nitrate-R-NapA-like"/>
    <property type="match status" value="1"/>
</dbReference>
<dbReference type="CDD" id="cd02754">
    <property type="entry name" value="MopB_Nitrate-R-NapA-like"/>
    <property type="match status" value="1"/>
</dbReference>
<dbReference type="FunFam" id="2.40.40.20:FF:000005">
    <property type="entry name" value="Periplasmic nitrate reductase"/>
    <property type="match status" value="1"/>
</dbReference>
<dbReference type="Gene3D" id="2.40.40.20">
    <property type="match status" value="1"/>
</dbReference>
<dbReference type="Gene3D" id="3.30.200.210">
    <property type="match status" value="1"/>
</dbReference>
<dbReference type="Gene3D" id="3.40.50.740">
    <property type="match status" value="1"/>
</dbReference>
<dbReference type="Gene3D" id="3.40.228.10">
    <property type="entry name" value="Dimethylsulfoxide Reductase, domain 2"/>
    <property type="match status" value="1"/>
</dbReference>
<dbReference type="HAMAP" id="MF_01630">
    <property type="entry name" value="Nitrate_reduct_NapA"/>
    <property type="match status" value="1"/>
</dbReference>
<dbReference type="InterPro" id="IPR009010">
    <property type="entry name" value="Asp_de-COase-like_dom_sf"/>
</dbReference>
<dbReference type="InterPro" id="IPR041957">
    <property type="entry name" value="CT_Nitrate-R-NapA-like"/>
</dbReference>
<dbReference type="InterPro" id="IPR006657">
    <property type="entry name" value="MoPterin_dinucl-bd_dom"/>
</dbReference>
<dbReference type="InterPro" id="IPR006656">
    <property type="entry name" value="Mopterin_OxRdtase"/>
</dbReference>
<dbReference type="InterPro" id="IPR006963">
    <property type="entry name" value="Mopterin_OxRdtase_4Fe-4S_dom"/>
</dbReference>
<dbReference type="InterPro" id="IPR027467">
    <property type="entry name" value="MopterinOxRdtase_cofactor_BS"/>
</dbReference>
<dbReference type="InterPro" id="IPR010051">
    <property type="entry name" value="Periplasm_NO3_reductase_lsu"/>
</dbReference>
<dbReference type="InterPro" id="IPR050123">
    <property type="entry name" value="Prok_molybdopt-oxidoreductase"/>
</dbReference>
<dbReference type="InterPro" id="IPR006311">
    <property type="entry name" value="TAT_signal"/>
</dbReference>
<dbReference type="NCBIfam" id="TIGR01706">
    <property type="entry name" value="NAPA"/>
    <property type="match status" value="1"/>
</dbReference>
<dbReference type="NCBIfam" id="NF010055">
    <property type="entry name" value="PRK13532.1"/>
    <property type="match status" value="1"/>
</dbReference>
<dbReference type="PANTHER" id="PTHR43105:SF11">
    <property type="entry name" value="PERIPLASMIC NITRATE REDUCTASE"/>
    <property type="match status" value="1"/>
</dbReference>
<dbReference type="PANTHER" id="PTHR43105">
    <property type="entry name" value="RESPIRATORY NITRATE REDUCTASE"/>
    <property type="match status" value="1"/>
</dbReference>
<dbReference type="Pfam" id="PF04879">
    <property type="entry name" value="Molybdop_Fe4S4"/>
    <property type="match status" value="1"/>
</dbReference>
<dbReference type="Pfam" id="PF00384">
    <property type="entry name" value="Molybdopterin"/>
    <property type="match status" value="1"/>
</dbReference>
<dbReference type="Pfam" id="PF01568">
    <property type="entry name" value="Molydop_binding"/>
    <property type="match status" value="1"/>
</dbReference>
<dbReference type="SMART" id="SM00926">
    <property type="entry name" value="Molybdop_Fe4S4"/>
    <property type="match status" value="1"/>
</dbReference>
<dbReference type="SUPFAM" id="SSF50692">
    <property type="entry name" value="ADC-like"/>
    <property type="match status" value="1"/>
</dbReference>
<dbReference type="SUPFAM" id="SSF53706">
    <property type="entry name" value="Formate dehydrogenase/DMSO reductase, domains 1-3"/>
    <property type="match status" value="1"/>
</dbReference>
<dbReference type="PROSITE" id="PS51669">
    <property type="entry name" value="4FE4S_MOW_BIS_MGD"/>
    <property type="match status" value="1"/>
</dbReference>
<dbReference type="PROSITE" id="PS00551">
    <property type="entry name" value="MOLYBDOPTERIN_PROK_1"/>
    <property type="match status" value="1"/>
</dbReference>
<dbReference type="PROSITE" id="PS51318">
    <property type="entry name" value="TAT"/>
    <property type="match status" value="1"/>
</dbReference>
<reference key="1">
    <citation type="journal article" date="2003" name="Lancet">
        <title>Genome sequence of Vibrio parahaemolyticus: a pathogenic mechanism distinct from that of V. cholerae.</title>
        <authorList>
            <person name="Makino K."/>
            <person name="Oshima K."/>
            <person name="Kurokawa K."/>
            <person name="Yokoyama K."/>
            <person name="Uda T."/>
            <person name="Tagomori K."/>
            <person name="Iijima Y."/>
            <person name="Najima M."/>
            <person name="Nakano M."/>
            <person name="Yamashita A."/>
            <person name="Kubota Y."/>
            <person name="Kimura S."/>
            <person name="Yasunaga T."/>
            <person name="Honda T."/>
            <person name="Shinagawa H."/>
            <person name="Hattori M."/>
            <person name="Iida T."/>
        </authorList>
    </citation>
    <scope>NUCLEOTIDE SEQUENCE [LARGE SCALE GENOMIC DNA]</scope>
    <source>
        <strain>RIMD 2210633</strain>
    </source>
</reference>
<proteinExistence type="inferred from homology"/>
<organism>
    <name type="scientific">Vibrio parahaemolyticus serotype O3:K6 (strain RIMD 2210633)</name>
    <dbReference type="NCBI Taxonomy" id="223926"/>
    <lineage>
        <taxon>Bacteria</taxon>
        <taxon>Pseudomonadati</taxon>
        <taxon>Pseudomonadota</taxon>
        <taxon>Gammaproteobacteria</taxon>
        <taxon>Vibrionales</taxon>
        <taxon>Vibrionaceae</taxon>
        <taxon>Vibrio</taxon>
    </lineage>
</organism>